<evidence type="ECO:0000255" key="1">
    <source>
        <dbReference type="HAMAP-Rule" id="MF_03119"/>
    </source>
</evidence>
<dbReference type="EC" id="5.3.1.23" evidence="1"/>
<dbReference type="EMBL" id="Z81030">
    <property type="protein sequence ID" value="CAB02711.1"/>
    <property type="molecule type" value="Genomic_DNA"/>
</dbReference>
<dbReference type="PIR" id="T18820">
    <property type="entry name" value="T18820"/>
</dbReference>
<dbReference type="RefSeq" id="NP_506714.1">
    <property type="nucleotide sequence ID" value="NM_074313.8"/>
</dbReference>
<dbReference type="SMR" id="Q93169"/>
<dbReference type="BioGRID" id="45011">
    <property type="interactions" value="2"/>
</dbReference>
<dbReference type="FunCoup" id="Q93169">
    <property type="interactions" value="2581"/>
</dbReference>
<dbReference type="STRING" id="6239.C01G10.9.2"/>
<dbReference type="PaxDb" id="6239-C01G10.9"/>
<dbReference type="PeptideAtlas" id="Q93169"/>
<dbReference type="EnsemblMetazoa" id="C01G10.9.1">
    <property type="protein sequence ID" value="C01G10.9.1"/>
    <property type="gene ID" value="WBGene00007236"/>
</dbReference>
<dbReference type="GeneID" id="180016"/>
<dbReference type="KEGG" id="cel:CELE_C01G10.9"/>
<dbReference type="UCSC" id="C01G10.9">
    <property type="organism name" value="c. elegans"/>
</dbReference>
<dbReference type="AGR" id="WB:WBGene00007236"/>
<dbReference type="CTD" id="180016"/>
<dbReference type="WormBase" id="C01G10.9">
    <property type="protein sequence ID" value="CE07818"/>
    <property type="gene ID" value="WBGene00007236"/>
</dbReference>
<dbReference type="eggNOG" id="KOG1468">
    <property type="taxonomic scope" value="Eukaryota"/>
</dbReference>
<dbReference type="GeneTree" id="ENSGT00390000013732"/>
<dbReference type="HOGENOM" id="CLU_016218_1_2_1"/>
<dbReference type="InParanoid" id="Q93169"/>
<dbReference type="OMA" id="CETRPLN"/>
<dbReference type="OrthoDB" id="2461at2759"/>
<dbReference type="PhylomeDB" id="Q93169"/>
<dbReference type="Reactome" id="R-CEL-1237112">
    <property type="pathway name" value="Methionine salvage pathway"/>
</dbReference>
<dbReference type="UniPathway" id="UPA00904">
    <property type="reaction ID" value="UER00874"/>
</dbReference>
<dbReference type="PRO" id="PR:Q93169"/>
<dbReference type="Proteomes" id="UP000001940">
    <property type="component" value="Chromosome V"/>
</dbReference>
<dbReference type="Bgee" id="WBGene00007236">
    <property type="expression patterns" value="Expressed in embryo and 4 other cell types or tissues"/>
</dbReference>
<dbReference type="GO" id="GO:0005737">
    <property type="term" value="C:cytoplasm"/>
    <property type="evidence" value="ECO:0007669"/>
    <property type="project" value="UniProtKB-SubCell"/>
</dbReference>
<dbReference type="GO" id="GO:0005634">
    <property type="term" value="C:nucleus"/>
    <property type="evidence" value="ECO:0007669"/>
    <property type="project" value="UniProtKB-SubCell"/>
</dbReference>
<dbReference type="GO" id="GO:0046523">
    <property type="term" value="F:S-methyl-5-thioribose-1-phosphate isomerase activity"/>
    <property type="evidence" value="ECO:0000318"/>
    <property type="project" value="GO_Central"/>
</dbReference>
<dbReference type="GO" id="GO:0019509">
    <property type="term" value="P:L-methionine salvage from methylthioadenosine"/>
    <property type="evidence" value="ECO:0000318"/>
    <property type="project" value="GO_Central"/>
</dbReference>
<dbReference type="FunFam" id="1.20.120.420:FF:000015">
    <property type="entry name" value="Methylthioribose-1-phosphate isomerase"/>
    <property type="match status" value="1"/>
</dbReference>
<dbReference type="FunFam" id="3.40.50.10470:FF:000028">
    <property type="entry name" value="Methylthioribose-1-phosphate isomerase"/>
    <property type="match status" value="1"/>
</dbReference>
<dbReference type="Gene3D" id="1.20.120.420">
    <property type="entry name" value="translation initiation factor eif-2b, domain 1"/>
    <property type="match status" value="1"/>
</dbReference>
<dbReference type="Gene3D" id="3.40.50.10470">
    <property type="entry name" value="Translation initiation factor eif-2b, domain 2"/>
    <property type="match status" value="1"/>
</dbReference>
<dbReference type="HAMAP" id="MF_01678">
    <property type="entry name" value="Salvage_MtnA"/>
    <property type="match status" value="1"/>
</dbReference>
<dbReference type="InterPro" id="IPR000649">
    <property type="entry name" value="IF-2B-related"/>
</dbReference>
<dbReference type="InterPro" id="IPR005251">
    <property type="entry name" value="IF-M1Pi"/>
</dbReference>
<dbReference type="InterPro" id="IPR042529">
    <property type="entry name" value="IF_2B-like_C"/>
</dbReference>
<dbReference type="InterPro" id="IPR011559">
    <property type="entry name" value="Initiation_fac_2B_a/b/d"/>
</dbReference>
<dbReference type="InterPro" id="IPR027363">
    <property type="entry name" value="M1Pi_N"/>
</dbReference>
<dbReference type="InterPro" id="IPR037171">
    <property type="entry name" value="NagB/RpiA_transferase-like"/>
</dbReference>
<dbReference type="NCBIfam" id="TIGR00524">
    <property type="entry name" value="eIF-2B_rel"/>
    <property type="match status" value="1"/>
</dbReference>
<dbReference type="NCBIfam" id="NF004326">
    <property type="entry name" value="PRK05720.1"/>
    <property type="match status" value="1"/>
</dbReference>
<dbReference type="NCBIfam" id="TIGR00512">
    <property type="entry name" value="salvage_mtnA"/>
    <property type="match status" value="1"/>
</dbReference>
<dbReference type="PANTHER" id="PTHR43475">
    <property type="entry name" value="METHYLTHIORIBOSE-1-PHOSPHATE ISOMERASE"/>
    <property type="match status" value="1"/>
</dbReference>
<dbReference type="PANTHER" id="PTHR43475:SF1">
    <property type="entry name" value="METHYLTHIORIBOSE-1-PHOSPHATE ISOMERASE"/>
    <property type="match status" value="1"/>
</dbReference>
<dbReference type="Pfam" id="PF01008">
    <property type="entry name" value="IF-2B"/>
    <property type="match status" value="1"/>
</dbReference>
<dbReference type="SUPFAM" id="SSF100950">
    <property type="entry name" value="NagB/RpiA/CoA transferase-like"/>
    <property type="match status" value="1"/>
</dbReference>
<keyword id="KW-0028">Amino-acid biosynthesis</keyword>
<keyword id="KW-0963">Cytoplasm</keyword>
<keyword id="KW-0413">Isomerase</keyword>
<keyword id="KW-0486">Methionine biosynthesis</keyword>
<keyword id="KW-0539">Nucleus</keyword>
<keyword id="KW-1185">Reference proteome</keyword>
<gene>
    <name type="ORF">C01G10.9</name>
</gene>
<feature type="chain" id="PRO_0000156111" description="Methylthioribose-1-phosphate isomerase">
    <location>
        <begin position="1"/>
        <end position="366"/>
    </location>
</feature>
<feature type="active site" description="Proton donor" evidence="1">
    <location>
        <position position="260"/>
    </location>
</feature>
<feature type="site" description="Transition state stabilizer" evidence="1">
    <location>
        <position position="180"/>
    </location>
</feature>
<reference key="1">
    <citation type="journal article" date="1998" name="Science">
        <title>Genome sequence of the nematode C. elegans: a platform for investigating biology.</title>
        <authorList>
            <consortium name="The C. elegans sequencing consortium"/>
        </authorList>
    </citation>
    <scope>NUCLEOTIDE SEQUENCE [LARGE SCALE GENOMIC DNA]</scope>
    <source>
        <strain>Bristol N2</strain>
    </source>
</reference>
<proteinExistence type="inferred from homology"/>
<protein>
    <recommendedName>
        <fullName evidence="1">Methylthioribose-1-phosphate isomerase</fullName>
        <shortName evidence="1">M1Pi</shortName>
        <shortName evidence="1">MTR-1-P isomerase</shortName>
        <ecNumber evidence="1">5.3.1.23</ecNumber>
    </recommendedName>
    <alternativeName>
        <fullName evidence="1">S-methyl-5-thioribose-1-phosphate isomerase</fullName>
    </alternativeName>
    <alternativeName>
        <fullName evidence="1">Translation initiation factor eIF-2B subunit alpha/beta/delta-like protein</fullName>
    </alternativeName>
</protein>
<accession>Q93169</accession>
<sequence>MTSKINKIVNGPIPDSFLFDESKRLDSLKFDGTNLEVLDQLLLPHEFKYIPVEGVSDAFAVIKSMQVRGAPLIAVVGSLGLLLEIQKASELDSESIIQKINFLISSRPTAVDLRNSLNGLKPILESQDYSDVVKLEKCRSYLLNVYTDEKLQNRILVWNAYQELLSAFPDKEKLTVMTICNTGSLATISWGTALGVIRALHSENRLKLVYVLETRPYNQGIRLTSIELLHGEVPFKLITDSMAAWAMKNHQVDCVLTGADNVARNGDTANKIGTYMLAVLCKHHNINFYPVVPFTTINKNIATGEEIKIEERPSAEMLRVNGVLIGNSECPVWNPAFDVTPAHLITKILTDFGNWPPEMLEQQIPK</sequence>
<name>MTNA_CAEEL</name>
<organism>
    <name type="scientific">Caenorhabditis elegans</name>
    <dbReference type="NCBI Taxonomy" id="6239"/>
    <lineage>
        <taxon>Eukaryota</taxon>
        <taxon>Metazoa</taxon>
        <taxon>Ecdysozoa</taxon>
        <taxon>Nematoda</taxon>
        <taxon>Chromadorea</taxon>
        <taxon>Rhabditida</taxon>
        <taxon>Rhabditina</taxon>
        <taxon>Rhabditomorpha</taxon>
        <taxon>Rhabditoidea</taxon>
        <taxon>Rhabditidae</taxon>
        <taxon>Peloderinae</taxon>
        <taxon>Caenorhabditis</taxon>
    </lineage>
</organism>
<comment type="function">
    <text evidence="1">Catalyzes the interconversion of methylthioribose-1-phosphate (MTR-1-P) into methylthioribulose-1-phosphate (MTRu-1-P).</text>
</comment>
<comment type="catalytic activity">
    <reaction evidence="1">
        <text>5-(methylsulfanyl)-alpha-D-ribose 1-phosphate = 5-(methylsulfanyl)-D-ribulose 1-phosphate</text>
        <dbReference type="Rhea" id="RHEA:19989"/>
        <dbReference type="ChEBI" id="CHEBI:58533"/>
        <dbReference type="ChEBI" id="CHEBI:58548"/>
        <dbReference type="EC" id="5.3.1.23"/>
    </reaction>
</comment>
<comment type="pathway">
    <text evidence="1">Amino-acid biosynthesis; L-methionine biosynthesis via salvage pathway; L-methionine from S-methyl-5-thio-alpha-D-ribose 1-phosphate: step 1/6.</text>
</comment>
<comment type="subcellular location">
    <subcellularLocation>
        <location evidence="1">Cytoplasm</location>
    </subcellularLocation>
    <subcellularLocation>
        <location evidence="1">Nucleus</location>
    </subcellularLocation>
</comment>
<comment type="similarity">
    <text evidence="1">Belongs to the eIF-2B alpha/beta/delta subunits family. MtnA subfamily.</text>
</comment>